<keyword id="KW-0687">Ribonucleoprotein</keyword>
<keyword id="KW-0689">Ribosomal protein</keyword>
<keyword id="KW-0694">RNA-binding</keyword>
<keyword id="KW-0699">rRNA-binding</keyword>
<proteinExistence type="inferred from homology"/>
<dbReference type="EMBL" id="AF404830">
    <property type="protein sequence ID" value="AAK92538.1"/>
    <property type="molecule type" value="Genomic_DNA"/>
</dbReference>
<dbReference type="SMR" id="Q977U8"/>
<dbReference type="GO" id="GO:1990904">
    <property type="term" value="C:ribonucleoprotein complex"/>
    <property type="evidence" value="ECO:0007669"/>
    <property type="project" value="UniProtKB-KW"/>
</dbReference>
<dbReference type="GO" id="GO:0005840">
    <property type="term" value="C:ribosome"/>
    <property type="evidence" value="ECO:0007669"/>
    <property type="project" value="UniProtKB-KW"/>
</dbReference>
<dbReference type="GO" id="GO:0019843">
    <property type="term" value="F:rRNA binding"/>
    <property type="evidence" value="ECO:0007669"/>
    <property type="project" value="UniProtKB-UniRule"/>
</dbReference>
<dbReference type="GO" id="GO:0003735">
    <property type="term" value="F:structural constituent of ribosome"/>
    <property type="evidence" value="ECO:0007669"/>
    <property type="project" value="InterPro"/>
</dbReference>
<dbReference type="GO" id="GO:0006412">
    <property type="term" value="P:translation"/>
    <property type="evidence" value="ECO:0007669"/>
    <property type="project" value="UniProtKB-UniRule"/>
</dbReference>
<dbReference type="FunFam" id="3.30.1370.30:FF:000001">
    <property type="entry name" value="40S ribosomal protein S15a"/>
    <property type="match status" value="1"/>
</dbReference>
<dbReference type="Gene3D" id="3.30.1370.30">
    <property type="match status" value="1"/>
</dbReference>
<dbReference type="Gene3D" id="3.30.1490.10">
    <property type="match status" value="1"/>
</dbReference>
<dbReference type="HAMAP" id="MF_01302_A">
    <property type="entry name" value="Ribosomal_uS8_A"/>
    <property type="match status" value="1"/>
</dbReference>
<dbReference type="InterPro" id="IPR000630">
    <property type="entry name" value="Ribosomal_uS8"/>
</dbReference>
<dbReference type="InterPro" id="IPR047863">
    <property type="entry name" value="Ribosomal_uS8_CS"/>
</dbReference>
<dbReference type="InterPro" id="IPR035987">
    <property type="entry name" value="Ribosomal_uS8_sf"/>
</dbReference>
<dbReference type="NCBIfam" id="NF003115">
    <property type="entry name" value="PRK04034.1"/>
    <property type="match status" value="1"/>
</dbReference>
<dbReference type="PANTHER" id="PTHR11758">
    <property type="entry name" value="40S RIBOSOMAL PROTEIN S15A"/>
    <property type="match status" value="1"/>
</dbReference>
<dbReference type="Pfam" id="PF00410">
    <property type="entry name" value="Ribosomal_S8"/>
    <property type="match status" value="1"/>
</dbReference>
<dbReference type="SUPFAM" id="SSF56047">
    <property type="entry name" value="Ribosomal protein S8"/>
    <property type="match status" value="1"/>
</dbReference>
<dbReference type="PROSITE" id="PS00053">
    <property type="entry name" value="RIBOSOMAL_S8"/>
    <property type="match status" value="1"/>
</dbReference>
<gene>
    <name evidence="1" type="primary">rps8</name>
</gene>
<feature type="chain" id="PRO_0000126545" description="Small ribosomal subunit protein uS8">
    <location>
        <begin position="1"/>
        <end position="130"/>
    </location>
</feature>
<accession>Q977U8</accession>
<protein>
    <recommendedName>
        <fullName evidence="1">Small ribosomal subunit protein uS8</fullName>
    </recommendedName>
    <alternativeName>
        <fullName evidence="2">30S ribosomal protein S8</fullName>
    </alternativeName>
</protein>
<sequence length="130" mass="14364">MSLMDPLANALNHISNCEGVGKSVAYVKPASKLIGRVLNVMQDHGYIGNFEYIEDGRAGIYKVELIGQINKCGAVKPRYAVKKQEFEKFEKRYLPAKGFGLLIVSTPKGLMTHDEAKNQGLGGRLISYVF</sequence>
<organism>
    <name type="scientific">Methanothermococcus thermolithotrophicus</name>
    <name type="common">Methanococcus thermolithotrophicus</name>
    <dbReference type="NCBI Taxonomy" id="2186"/>
    <lineage>
        <taxon>Archaea</taxon>
        <taxon>Methanobacteriati</taxon>
        <taxon>Methanobacteriota</taxon>
        <taxon>Methanomada group</taxon>
        <taxon>Methanococci</taxon>
        <taxon>Methanococcales</taxon>
        <taxon>Methanococcaceae</taxon>
        <taxon>Methanothermococcus</taxon>
    </lineage>
</organism>
<comment type="function">
    <text evidence="1">One of the primary rRNA binding proteins, it binds directly to 16S rRNA central domain where it helps coordinate assembly of the platform of the 30S subunit.</text>
</comment>
<comment type="subunit">
    <text evidence="1">Part of the 30S ribosomal subunit.</text>
</comment>
<comment type="similarity">
    <text evidence="1">Belongs to the universal ribosomal protein uS8 family.</text>
</comment>
<name>RS8_METTL</name>
<reference key="1">
    <citation type="submission" date="2001-08" db="EMBL/GenBank/DDBJ databases">
        <title>Sequence of the gene of ribosomal protein S8 from Methanococcus thermolithotrophicus.</title>
        <authorList>
            <person name="Lung B."/>
            <person name="Piendl W.A."/>
        </authorList>
    </citation>
    <scope>NUCLEOTIDE SEQUENCE [GENOMIC DNA]</scope>
</reference>
<evidence type="ECO:0000255" key="1">
    <source>
        <dbReference type="HAMAP-Rule" id="MF_01302"/>
    </source>
</evidence>
<evidence type="ECO:0000305" key="2"/>